<gene>
    <name evidence="1" type="primary">tal</name>
    <name type="ordered locus">Arth_2096</name>
</gene>
<protein>
    <recommendedName>
        <fullName evidence="1">Transaldolase</fullName>
        <ecNumber evidence="1">2.2.1.2</ecNumber>
    </recommendedName>
</protein>
<sequence length="371" mass="39531">MTTPTQQLSDAGVSIWLDDLSRGRLQTGTLRKLIEEKNVVGVTTNPSIFHAAITSGTDYDATIAEQAAAGSTVEETVFEITTTDVADACDLFAPVAAATRGVDGRVSIEVDPRLAWDTAGTIAEAKHLYKKVNKDNVLIKIPATLEGLEAITATLAEGISVNVTLIFSLERYRAVINAFQSGLEQAKGNGHDLSKIHSVASFFVSRVDAEIDKRLDAIGTDEAKALKGKAGLANARLAYQVYEELFSTERWALLAEAGALPQRPLWASTGVKDPSYPDTLYVTELVAPGVVNTMPEKTLDATFDHGVVTGDTVTRGYDDANATLNALDALGISYNDVVALLESEGLDKFVASWKELLGDVEGALASARKAS</sequence>
<evidence type="ECO:0000255" key="1">
    <source>
        <dbReference type="HAMAP-Rule" id="MF_00493"/>
    </source>
</evidence>
<comment type="function">
    <text evidence="1">Transaldolase is important for the balance of metabolites in the pentose-phosphate pathway.</text>
</comment>
<comment type="catalytic activity">
    <reaction evidence="1">
        <text>D-sedoheptulose 7-phosphate + D-glyceraldehyde 3-phosphate = D-erythrose 4-phosphate + beta-D-fructose 6-phosphate</text>
        <dbReference type="Rhea" id="RHEA:17053"/>
        <dbReference type="ChEBI" id="CHEBI:16897"/>
        <dbReference type="ChEBI" id="CHEBI:57483"/>
        <dbReference type="ChEBI" id="CHEBI:57634"/>
        <dbReference type="ChEBI" id="CHEBI:59776"/>
        <dbReference type="EC" id="2.2.1.2"/>
    </reaction>
</comment>
<comment type="pathway">
    <text evidence="1">Carbohydrate degradation; pentose phosphate pathway; D-glyceraldehyde 3-phosphate and beta-D-fructose 6-phosphate from D-ribose 5-phosphate and D-xylulose 5-phosphate (non-oxidative stage): step 2/3.</text>
</comment>
<comment type="subcellular location">
    <subcellularLocation>
        <location evidence="1">Cytoplasm</location>
    </subcellularLocation>
</comment>
<comment type="similarity">
    <text evidence="1">Belongs to the transaldolase family. Type 2 subfamily.</text>
</comment>
<proteinExistence type="inferred from homology"/>
<organism>
    <name type="scientific">Arthrobacter sp. (strain FB24)</name>
    <dbReference type="NCBI Taxonomy" id="290399"/>
    <lineage>
        <taxon>Bacteria</taxon>
        <taxon>Bacillati</taxon>
        <taxon>Actinomycetota</taxon>
        <taxon>Actinomycetes</taxon>
        <taxon>Micrococcales</taxon>
        <taxon>Micrococcaceae</taxon>
        <taxon>Arthrobacter</taxon>
    </lineage>
</organism>
<feature type="chain" id="PRO_1000060453" description="Transaldolase">
    <location>
        <begin position="1"/>
        <end position="371"/>
    </location>
</feature>
<feature type="active site" description="Schiff-base intermediate with substrate" evidence="1">
    <location>
        <position position="140"/>
    </location>
</feature>
<name>TAL_ARTS2</name>
<accession>A0JWQ6</accession>
<reference key="1">
    <citation type="journal article" date="2013" name="Stand. Genomic Sci.">
        <title>Complete genome sequence of Arthrobacter sp. strain FB24.</title>
        <authorList>
            <person name="Nakatsu C.H."/>
            <person name="Barabote R."/>
            <person name="Thompson S."/>
            <person name="Bruce D."/>
            <person name="Detter C."/>
            <person name="Brettin T."/>
            <person name="Han C."/>
            <person name="Beasley F."/>
            <person name="Chen W."/>
            <person name="Konopka A."/>
            <person name="Xie G."/>
        </authorList>
    </citation>
    <scope>NUCLEOTIDE SEQUENCE [LARGE SCALE GENOMIC DNA]</scope>
    <source>
        <strain>FB24</strain>
    </source>
</reference>
<dbReference type="EC" id="2.2.1.2" evidence="1"/>
<dbReference type="EMBL" id="CP000454">
    <property type="protein sequence ID" value="ABK03476.1"/>
    <property type="molecule type" value="Genomic_DNA"/>
</dbReference>
<dbReference type="RefSeq" id="WP_011691942.1">
    <property type="nucleotide sequence ID" value="NC_008541.1"/>
</dbReference>
<dbReference type="SMR" id="A0JWQ6"/>
<dbReference type="STRING" id="290399.Arth_2096"/>
<dbReference type="KEGG" id="art:Arth_2096"/>
<dbReference type="eggNOG" id="COG0176">
    <property type="taxonomic scope" value="Bacteria"/>
</dbReference>
<dbReference type="HOGENOM" id="CLU_050771_1_0_11"/>
<dbReference type="OrthoDB" id="9809101at2"/>
<dbReference type="UniPathway" id="UPA00115">
    <property type="reaction ID" value="UER00414"/>
</dbReference>
<dbReference type="Proteomes" id="UP000000754">
    <property type="component" value="Chromosome"/>
</dbReference>
<dbReference type="GO" id="GO:0005737">
    <property type="term" value="C:cytoplasm"/>
    <property type="evidence" value="ECO:0007669"/>
    <property type="project" value="UniProtKB-SubCell"/>
</dbReference>
<dbReference type="GO" id="GO:0004801">
    <property type="term" value="F:transaldolase activity"/>
    <property type="evidence" value="ECO:0007669"/>
    <property type="project" value="UniProtKB-UniRule"/>
</dbReference>
<dbReference type="GO" id="GO:0005975">
    <property type="term" value="P:carbohydrate metabolic process"/>
    <property type="evidence" value="ECO:0007669"/>
    <property type="project" value="InterPro"/>
</dbReference>
<dbReference type="GO" id="GO:0006098">
    <property type="term" value="P:pentose-phosphate shunt"/>
    <property type="evidence" value="ECO:0007669"/>
    <property type="project" value="UniProtKB-UniRule"/>
</dbReference>
<dbReference type="CDD" id="cd00955">
    <property type="entry name" value="Transaldolase_like"/>
    <property type="match status" value="1"/>
</dbReference>
<dbReference type="Gene3D" id="3.20.20.70">
    <property type="entry name" value="Aldolase class I"/>
    <property type="match status" value="1"/>
</dbReference>
<dbReference type="HAMAP" id="MF_00493">
    <property type="entry name" value="Transaldolase_2"/>
    <property type="match status" value="1"/>
</dbReference>
<dbReference type="InterPro" id="IPR013785">
    <property type="entry name" value="Aldolase_TIM"/>
</dbReference>
<dbReference type="InterPro" id="IPR001585">
    <property type="entry name" value="TAL/FSA"/>
</dbReference>
<dbReference type="InterPro" id="IPR004732">
    <property type="entry name" value="Transaldolase_2"/>
</dbReference>
<dbReference type="InterPro" id="IPR018225">
    <property type="entry name" value="Transaldolase_AS"/>
</dbReference>
<dbReference type="NCBIfam" id="NF002881">
    <property type="entry name" value="PRK03343.1"/>
    <property type="match status" value="1"/>
</dbReference>
<dbReference type="NCBIfam" id="TIGR00876">
    <property type="entry name" value="tal_mycobact"/>
    <property type="match status" value="1"/>
</dbReference>
<dbReference type="PANTHER" id="PTHR10683">
    <property type="entry name" value="TRANSALDOLASE"/>
    <property type="match status" value="1"/>
</dbReference>
<dbReference type="PANTHER" id="PTHR10683:SF31">
    <property type="entry name" value="TRANSALDOLASE"/>
    <property type="match status" value="1"/>
</dbReference>
<dbReference type="Pfam" id="PF00923">
    <property type="entry name" value="TAL_FSA"/>
    <property type="match status" value="1"/>
</dbReference>
<dbReference type="PIRSF" id="PIRSF036915">
    <property type="entry name" value="Trnald_Bac_Plnt"/>
    <property type="match status" value="1"/>
</dbReference>
<dbReference type="SUPFAM" id="SSF51569">
    <property type="entry name" value="Aldolase"/>
    <property type="match status" value="1"/>
</dbReference>
<dbReference type="PROSITE" id="PS01054">
    <property type="entry name" value="TRANSALDOLASE_1"/>
    <property type="match status" value="1"/>
</dbReference>
<keyword id="KW-0963">Cytoplasm</keyword>
<keyword id="KW-0570">Pentose shunt</keyword>
<keyword id="KW-1185">Reference proteome</keyword>
<keyword id="KW-0704">Schiff base</keyword>
<keyword id="KW-0808">Transferase</keyword>